<reference key="1">
    <citation type="journal article" date="2010" name="PLoS ONE">
        <title>The complete multipartite genome sequence of Cupriavidus necator JMP134, a versatile pollutant degrader.</title>
        <authorList>
            <person name="Lykidis A."/>
            <person name="Perez-Pantoja D."/>
            <person name="Ledger T."/>
            <person name="Mavromatis K."/>
            <person name="Anderson I.J."/>
            <person name="Ivanova N.N."/>
            <person name="Hooper S.D."/>
            <person name="Lapidus A."/>
            <person name="Lucas S."/>
            <person name="Gonzalez B."/>
            <person name="Kyrpides N.C."/>
        </authorList>
    </citation>
    <scope>NUCLEOTIDE SEQUENCE [LARGE SCALE GENOMIC DNA]</scope>
    <source>
        <strain>JMP134 / LMG 1197</strain>
    </source>
</reference>
<proteinExistence type="inferred from homology"/>
<gene>
    <name type="ordered locus">Reut_A1981</name>
</gene>
<protein>
    <recommendedName>
        <fullName evidence="1">D-(-)-3-hydroxybutyrate oligomer hydrolase</fullName>
        <shortName evidence="1">3HB-oligomer hydrolase</shortName>
        <shortName evidence="1">3HBOH</shortName>
        <ecNumber evidence="1">3.1.1.22</ecNumber>
    </recommendedName>
</protein>
<evidence type="ECO:0000255" key="1">
    <source>
        <dbReference type="HAMAP-Rule" id="MF_01906"/>
    </source>
</evidence>
<keyword id="KW-0378">Hydrolase</keyword>
<keyword id="KW-0964">Secreted</keyword>
<keyword id="KW-0732">Signal</keyword>
<accession>Q46ZT8</accession>
<comment type="function">
    <text evidence="1">Participates in the degradation of poly-3-hydroxybutyrate (PHB). It works downstream of poly(3-hydroxybutyrate) depolymerase, hydrolyzing D(-)-3-hydroxybutyrate oligomers of various length (3HB-oligomers) into 3HB-monomers.</text>
</comment>
<comment type="catalytic activity">
    <reaction evidence="1">
        <text>(3R)-hydroxybutanoate dimer + H2O = 2 (R)-3-hydroxybutanoate + H(+)</text>
        <dbReference type="Rhea" id="RHEA:10172"/>
        <dbReference type="ChEBI" id="CHEBI:10979"/>
        <dbReference type="ChEBI" id="CHEBI:10983"/>
        <dbReference type="ChEBI" id="CHEBI:15377"/>
        <dbReference type="ChEBI" id="CHEBI:15378"/>
        <dbReference type="EC" id="3.1.1.22"/>
    </reaction>
</comment>
<comment type="pathway">
    <text evidence="1">Lipid metabolism; butanoate metabolism.</text>
</comment>
<comment type="subcellular location">
    <subcellularLocation>
        <location evidence="1">Secreted</location>
    </subcellularLocation>
</comment>
<comment type="similarity">
    <text evidence="1">Belongs to the D-(-)-3-hydroxybutyrate oligomer hydrolase family.</text>
</comment>
<feature type="signal peptide" evidence="1">
    <location>
        <begin position="1"/>
        <end position="24"/>
    </location>
</feature>
<feature type="chain" id="PRO_0000314430" description="D-(-)-3-hydroxybutyrate oligomer hydrolase">
    <location>
        <begin position="25"/>
        <end position="707"/>
    </location>
</feature>
<feature type="active site" description="Charge relay system" evidence="1">
    <location>
        <position position="311"/>
    </location>
</feature>
<sequence>MHHDNFRRLGNAAFAAAAALLAVACGGGDSSDGNTNPNIKPANIGTVTIQAYDGATDDLLTAGLGKDGLASATAPVPASPNSPTAAELRRYAIYTNYRAIVDTTAGGGFGSLYGPNVDAQGNVTTGQGKIAGVEYLAFSDDGSGQENVTMLVQIPNTFNQSKPCMITATSSGSRGVYGAIAVGEWGLKRGCAVAYTDKGTGAAPHDLDTDTVPLIDGTRTTRSAAGTNAQFAARPGILSLADFTAQVPHRLAFKHAHSQRNPEKDWGKFTLQAIEFGIWAINDRFGTVASNGVRQRTLAKSKIVVIASSVSNGGGAAVAAAEQDTDGLIDGVAVAEPNLNLPPNASILVKRGSKPVNASGRLLYDYITTANLLQLCASQATALVNAPAFATNQFYISRCQTLVDNKLISGTTVSDQAASALDQLHLAGWEPESDALHPSLSLFDTAASIAVTYANSYARASVTDRLCGYSFAATLADFKPAAIAPSVLASMFATGNGVPPTSTVQLINDRDLQHGPFMNGQSVSASNNRADANFDGAKCLRDLLTGTDSQAQALQSGVSQIQRSGNLHGKPALIVHGRSDGLLPVNHTSRPYLGFNRQQEGAASKLSYIEVENAQHFDAFIGAVSGYSNRYVPLHLYLIRALDAVYDNLTTGKALPPSQVVRTIPRGGATNTTTAPTLLPVNVPPISASPDAANQIAASTGSVDVPD</sequence>
<name>HBOH_CUPPJ</name>
<dbReference type="EC" id="3.1.1.22" evidence="1"/>
<dbReference type="EMBL" id="CP000090">
    <property type="protein sequence ID" value="AAZ61345.1"/>
    <property type="molecule type" value="Genomic_DNA"/>
</dbReference>
<dbReference type="STRING" id="264198.Reut_A1981"/>
<dbReference type="ESTHER" id="cupnj-hboh">
    <property type="family name" value="OHBut_olig_hydro_put"/>
</dbReference>
<dbReference type="KEGG" id="reu:Reut_A1981"/>
<dbReference type="eggNOG" id="ENOG502Z8QU">
    <property type="taxonomic scope" value="Bacteria"/>
</dbReference>
<dbReference type="HOGENOM" id="CLU_420258_0_0_4"/>
<dbReference type="OrthoDB" id="4294477at2"/>
<dbReference type="UniPathway" id="UPA00863"/>
<dbReference type="GO" id="GO:0005615">
    <property type="term" value="C:extracellular space"/>
    <property type="evidence" value="ECO:0007669"/>
    <property type="project" value="InterPro"/>
</dbReference>
<dbReference type="GO" id="GO:0047989">
    <property type="term" value="F:hydroxybutyrate-dimer hydrolase activity"/>
    <property type="evidence" value="ECO:0007669"/>
    <property type="project" value="UniProtKB-UniRule"/>
</dbReference>
<dbReference type="GO" id="GO:0019605">
    <property type="term" value="P:butyrate metabolic process"/>
    <property type="evidence" value="ECO:0007669"/>
    <property type="project" value="UniProtKB-UniRule"/>
</dbReference>
<dbReference type="HAMAP" id="MF_01906">
    <property type="entry name" value="3HBOH"/>
    <property type="match status" value="1"/>
</dbReference>
<dbReference type="InterPro" id="IPR016582">
    <property type="entry name" value="OHBut_olig_hydro_put"/>
</dbReference>
<dbReference type="Pfam" id="PF10605">
    <property type="entry name" value="3HBOH"/>
    <property type="match status" value="1"/>
</dbReference>
<dbReference type="PIRSF" id="PIRSF011409">
    <property type="entry name" value="HObutyrate_olig_hydrol"/>
    <property type="match status" value="1"/>
</dbReference>
<organism>
    <name type="scientific">Cupriavidus pinatubonensis (strain JMP 134 / LMG 1197)</name>
    <name type="common">Cupriavidus necator (strain JMP 134)</name>
    <dbReference type="NCBI Taxonomy" id="264198"/>
    <lineage>
        <taxon>Bacteria</taxon>
        <taxon>Pseudomonadati</taxon>
        <taxon>Pseudomonadota</taxon>
        <taxon>Betaproteobacteria</taxon>
        <taxon>Burkholderiales</taxon>
        <taxon>Burkholderiaceae</taxon>
        <taxon>Cupriavidus</taxon>
    </lineage>
</organism>